<organism>
    <name type="scientific">Phascogale tapoatafa</name>
    <name type="common">Common wambenger</name>
    <dbReference type="NCBI Taxonomy" id="9293"/>
    <lineage>
        <taxon>Eukaryota</taxon>
        <taxon>Metazoa</taxon>
        <taxon>Chordata</taxon>
        <taxon>Craniata</taxon>
        <taxon>Vertebrata</taxon>
        <taxon>Euteleostomi</taxon>
        <taxon>Mammalia</taxon>
        <taxon>Metatheria</taxon>
        <taxon>Dasyuromorphia</taxon>
        <taxon>Dasyuridae</taxon>
        <taxon>Phascogale</taxon>
    </lineage>
</organism>
<accession>P67847</accession>
<accession>P42140</accession>
<accession>P42150</accession>
<accession>P42154</accession>
<evidence type="ECO:0000256" key="1">
    <source>
        <dbReference type="SAM" id="MobiDB-lite"/>
    </source>
</evidence>
<evidence type="ECO:0000305" key="2"/>
<name>HSP1_PHATA</name>
<comment type="function">
    <text>Protamines substitute for histones in the chromatin of sperm during the haploid phase of spermatogenesis. They compact sperm DNA into a highly condensed, stable and inactive complex.</text>
</comment>
<comment type="subcellular location">
    <subcellularLocation>
        <location>Nucleus</location>
    </subcellularLocation>
    <subcellularLocation>
        <location>Chromosome</location>
    </subcellularLocation>
</comment>
<comment type="tissue specificity">
    <text>Testis.</text>
</comment>
<comment type="similarity">
    <text evidence="2">Belongs to the protamine P1 family.</text>
</comment>
<proteinExistence type="evidence at transcript level"/>
<sequence>MARYRRHSRSRSRSRYRRRRRRRSRHHNRRRTYRRSRRHSRRRRGRRRGYSRRRYSRRGRRRY</sequence>
<dbReference type="EMBL" id="L35327">
    <property type="protein sequence ID" value="AAA74606.1"/>
    <property type="molecule type" value="Genomic_DNA"/>
</dbReference>
<dbReference type="GO" id="GO:0000786">
    <property type="term" value="C:nucleosome"/>
    <property type="evidence" value="ECO:0007669"/>
    <property type="project" value="UniProtKB-KW"/>
</dbReference>
<dbReference type="GO" id="GO:0005634">
    <property type="term" value="C:nucleus"/>
    <property type="evidence" value="ECO:0007669"/>
    <property type="project" value="UniProtKB-SubCell"/>
</dbReference>
<dbReference type="GO" id="GO:0003677">
    <property type="term" value="F:DNA binding"/>
    <property type="evidence" value="ECO:0007669"/>
    <property type="project" value="UniProtKB-KW"/>
</dbReference>
<dbReference type="GO" id="GO:0030261">
    <property type="term" value="P:chromosome condensation"/>
    <property type="evidence" value="ECO:0007669"/>
    <property type="project" value="UniProtKB-KW"/>
</dbReference>
<dbReference type="GO" id="GO:0035092">
    <property type="term" value="P:sperm DNA condensation"/>
    <property type="evidence" value="ECO:0007669"/>
    <property type="project" value="InterPro"/>
</dbReference>
<dbReference type="InterPro" id="IPR000221">
    <property type="entry name" value="Protamine_P1"/>
</dbReference>
<dbReference type="PROSITE" id="PS00048">
    <property type="entry name" value="PROTAMINE_P1"/>
    <property type="match status" value="1"/>
</dbReference>
<feature type="chain" id="PRO_0000191530" description="Sperm protamine P1">
    <location>
        <begin position="1"/>
        <end position="63"/>
    </location>
</feature>
<feature type="region of interest" description="Disordered" evidence="1">
    <location>
        <begin position="1"/>
        <end position="63"/>
    </location>
</feature>
<gene>
    <name type="primary">PRM1</name>
</gene>
<keyword id="KW-0158">Chromosome</keyword>
<keyword id="KW-0217">Developmental protein</keyword>
<keyword id="KW-0221">Differentiation</keyword>
<keyword id="KW-0226">DNA condensation</keyword>
<keyword id="KW-0238">DNA-binding</keyword>
<keyword id="KW-0544">Nucleosome core</keyword>
<keyword id="KW-0539">Nucleus</keyword>
<keyword id="KW-0744">Spermatogenesis</keyword>
<protein>
    <recommendedName>
        <fullName>Sperm protamine P1</fullName>
    </recommendedName>
</protein>
<reference key="1">
    <citation type="journal article" date="1995" name="Proc. R. Soc. B">
        <title>Molecular phylogeny and evolution of marsupial protamine P1 genes.</title>
        <authorList>
            <person name="Retief J.D."/>
            <person name="Krajewski C."/>
            <person name="Westerman M."/>
            <person name="Winkfein R.J."/>
            <person name="Dixon G.H."/>
        </authorList>
    </citation>
    <scope>NUCLEOTIDE SEQUENCE [GENOMIC DNA]</scope>
    <source>
        <tissue>Sperm</tissue>
    </source>
</reference>